<comment type="function">
    <text evidence="1">Produces ATP from ADP in the presence of a proton gradient across the membrane. The gamma chain is believed to be important in regulating ATPase activity and the flow of protons through the CF(0) complex.</text>
</comment>
<comment type="subunit">
    <text evidence="1">F-type ATPases have 2 components, CF(1) - the catalytic core - and CF(0) - the membrane proton channel. CF(1) has five subunits: alpha(3), beta(3), gamma(1), delta(1), epsilon(1). CF(0) has three main subunits: a, b and c.</text>
</comment>
<comment type="subcellular location">
    <subcellularLocation>
        <location evidence="1">Cell membrane</location>
        <topology evidence="1">Peripheral membrane protein</topology>
    </subcellularLocation>
</comment>
<comment type="similarity">
    <text evidence="1">Belongs to the ATPase gamma chain family.</text>
</comment>
<name>ATPG_STRP6</name>
<protein>
    <recommendedName>
        <fullName evidence="1">ATP synthase gamma chain</fullName>
    </recommendedName>
    <alternativeName>
        <fullName evidence="1">ATP synthase F1 sector gamma subunit</fullName>
    </alternativeName>
    <alternativeName>
        <fullName evidence="1">F-ATPase gamma subunit</fullName>
    </alternativeName>
</protein>
<accession>Q5XCY1</accession>
<sequence>MAGSLSEIKAKIISTEKTSKITSAMRMVSSAKLVKSEQAARDFQIYASKIRQITTDLLKSELTIGSDNPMLVSRPVKKTGYIVITSDKGLVGGYNSKILKSVMDMITEYHADGDYEIISIGSVGSDFFKARGMNVAFELRGLADQPSFEQVRQIISQSVDMFVNEIFDELYVCYNHHVNSLTSQVRVQQMLPISDLVADEAAEEGVTGFELEPNRHDILDQLLPQFTESLIYGAIIDAKTAEHAAGMTAMQTATDNAKNVINDLTIQYNRARQAAITQEITEIVAGANALE</sequence>
<evidence type="ECO:0000255" key="1">
    <source>
        <dbReference type="HAMAP-Rule" id="MF_00815"/>
    </source>
</evidence>
<dbReference type="EMBL" id="CP000003">
    <property type="protein sequence ID" value="AAT86732.1"/>
    <property type="molecule type" value="Genomic_DNA"/>
</dbReference>
<dbReference type="RefSeq" id="WP_002985236.1">
    <property type="nucleotide sequence ID" value="NC_006086.1"/>
</dbReference>
<dbReference type="SMR" id="Q5XCY1"/>
<dbReference type="KEGG" id="spa:M6_Spy0597"/>
<dbReference type="HOGENOM" id="CLU_050669_0_1_9"/>
<dbReference type="Proteomes" id="UP000001167">
    <property type="component" value="Chromosome"/>
</dbReference>
<dbReference type="GO" id="GO:0005886">
    <property type="term" value="C:plasma membrane"/>
    <property type="evidence" value="ECO:0007669"/>
    <property type="project" value="UniProtKB-SubCell"/>
</dbReference>
<dbReference type="GO" id="GO:0045259">
    <property type="term" value="C:proton-transporting ATP synthase complex"/>
    <property type="evidence" value="ECO:0007669"/>
    <property type="project" value="UniProtKB-KW"/>
</dbReference>
<dbReference type="GO" id="GO:0005524">
    <property type="term" value="F:ATP binding"/>
    <property type="evidence" value="ECO:0007669"/>
    <property type="project" value="UniProtKB-UniRule"/>
</dbReference>
<dbReference type="GO" id="GO:0046933">
    <property type="term" value="F:proton-transporting ATP synthase activity, rotational mechanism"/>
    <property type="evidence" value="ECO:0007669"/>
    <property type="project" value="UniProtKB-UniRule"/>
</dbReference>
<dbReference type="GO" id="GO:0042777">
    <property type="term" value="P:proton motive force-driven plasma membrane ATP synthesis"/>
    <property type="evidence" value="ECO:0007669"/>
    <property type="project" value="UniProtKB-UniRule"/>
</dbReference>
<dbReference type="CDD" id="cd12151">
    <property type="entry name" value="F1-ATPase_gamma"/>
    <property type="match status" value="1"/>
</dbReference>
<dbReference type="FunFam" id="3.40.1380.10:FF:000002">
    <property type="entry name" value="ATP synthase gamma chain"/>
    <property type="match status" value="1"/>
</dbReference>
<dbReference type="Gene3D" id="3.40.1380.10">
    <property type="match status" value="1"/>
</dbReference>
<dbReference type="Gene3D" id="1.10.287.80">
    <property type="entry name" value="ATP synthase, gamma subunit, helix hairpin domain"/>
    <property type="match status" value="1"/>
</dbReference>
<dbReference type="HAMAP" id="MF_00815">
    <property type="entry name" value="ATP_synth_gamma_bact"/>
    <property type="match status" value="1"/>
</dbReference>
<dbReference type="InterPro" id="IPR035968">
    <property type="entry name" value="ATP_synth_F1_ATPase_gsu"/>
</dbReference>
<dbReference type="InterPro" id="IPR000131">
    <property type="entry name" value="ATP_synth_F1_gsu"/>
</dbReference>
<dbReference type="InterPro" id="IPR023632">
    <property type="entry name" value="ATP_synth_F1_gsu_CS"/>
</dbReference>
<dbReference type="NCBIfam" id="TIGR01146">
    <property type="entry name" value="ATPsyn_F1gamma"/>
    <property type="match status" value="1"/>
</dbReference>
<dbReference type="NCBIfam" id="NF004147">
    <property type="entry name" value="PRK05621.2-1"/>
    <property type="match status" value="1"/>
</dbReference>
<dbReference type="PANTHER" id="PTHR11693">
    <property type="entry name" value="ATP SYNTHASE GAMMA CHAIN"/>
    <property type="match status" value="1"/>
</dbReference>
<dbReference type="PANTHER" id="PTHR11693:SF22">
    <property type="entry name" value="ATP SYNTHASE SUBUNIT GAMMA, MITOCHONDRIAL"/>
    <property type="match status" value="1"/>
</dbReference>
<dbReference type="Pfam" id="PF00231">
    <property type="entry name" value="ATP-synt"/>
    <property type="match status" value="1"/>
</dbReference>
<dbReference type="PRINTS" id="PR00126">
    <property type="entry name" value="ATPASEGAMMA"/>
</dbReference>
<dbReference type="SUPFAM" id="SSF52943">
    <property type="entry name" value="ATP synthase (F1-ATPase), gamma subunit"/>
    <property type="match status" value="1"/>
</dbReference>
<dbReference type="PROSITE" id="PS00153">
    <property type="entry name" value="ATPASE_GAMMA"/>
    <property type="match status" value="1"/>
</dbReference>
<gene>
    <name evidence="1" type="primary">atpG</name>
    <name type="ordered locus">M6_Spy0597</name>
</gene>
<proteinExistence type="inferred from homology"/>
<reference key="1">
    <citation type="journal article" date="2004" name="J. Infect. Dis.">
        <title>Progress toward characterization of the group A Streptococcus metagenome: complete genome sequence of a macrolide-resistant serotype M6 strain.</title>
        <authorList>
            <person name="Banks D.J."/>
            <person name="Porcella S.F."/>
            <person name="Barbian K.D."/>
            <person name="Beres S.B."/>
            <person name="Philips L.E."/>
            <person name="Voyich J.M."/>
            <person name="DeLeo F.R."/>
            <person name="Martin J.M."/>
            <person name="Somerville G.A."/>
            <person name="Musser J.M."/>
        </authorList>
    </citation>
    <scope>NUCLEOTIDE SEQUENCE [LARGE SCALE GENOMIC DNA]</scope>
    <source>
        <strain>ATCC BAA-946 / MGAS10394</strain>
    </source>
</reference>
<keyword id="KW-0066">ATP synthesis</keyword>
<keyword id="KW-1003">Cell membrane</keyword>
<keyword id="KW-0139">CF(1)</keyword>
<keyword id="KW-0375">Hydrogen ion transport</keyword>
<keyword id="KW-0406">Ion transport</keyword>
<keyword id="KW-0472">Membrane</keyword>
<keyword id="KW-0813">Transport</keyword>
<feature type="chain" id="PRO_0000073393" description="ATP synthase gamma chain">
    <location>
        <begin position="1"/>
        <end position="291"/>
    </location>
</feature>
<organism>
    <name type="scientific">Streptococcus pyogenes serotype M6 (strain ATCC BAA-946 / MGAS10394)</name>
    <dbReference type="NCBI Taxonomy" id="286636"/>
    <lineage>
        <taxon>Bacteria</taxon>
        <taxon>Bacillati</taxon>
        <taxon>Bacillota</taxon>
        <taxon>Bacilli</taxon>
        <taxon>Lactobacillales</taxon>
        <taxon>Streptococcaceae</taxon>
        <taxon>Streptococcus</taxon>
    </lineage>
</organism>